<reference key="1">
    <citation type="journal article" date="2006" name="PLoS Genet.">
        <title>The complete genome sequence and comparative genome analysis of the high pathogenicity Yersinia enterocolitica strain 8081.</title>
        <authorList>
            <person name="Thomson N.R."/>
            <person name="Howard S."/>
            <person name="Wren B.W."/>
            <person name="Holden M.T.G."/>
            <person name="Crossman L."/>
            <person name="Challis G.L."/>
            <person name="Churcher C."/>
            <person name="Mungall K."/>
            <person name="Brooks K."/>
            <person name="Chillingworth T."/>
            <person name="Feltwell T."/>
            <person name="Abdellah Z."/>
            <person name="Hauser H."/>
            <person name="Jagels K."/>
            <person name="Maddison M."/>
            <person name="Moule S."/>
            <person name="Sanders M."/>
            <person name="Whitehead S."/>
            <person name="Quail M.A."/>
            <person name="Dougan G."/>
            <person name="Parkhill J."/>
            <person name="Prentice M.B."/>
        </authorList>
    </citation>
    <scope>NUCLEOTIDE SEQUENCE [LARGE SCALE GENOMIC DNA]</scope>
    <source>
        <strain>NCTC 13174 / 8081</strain>
    </source>
</reference>
<feature type="chain" id="PRO_1000088399" description="RNA polymerase-associated protein RapA">
    <location>
        <begin position="1"/>
        <end position="968"/>
    </location>
</feature>
<feature type="domain" description="Helicase ATP-binding" evidence="1">
    <location>
        <begin position="164"/>
        <end position="334"/>
    </location>
</feature>
<feature type="domain" description="Helicase C-terminal" evidence="1">
    <location>
        <begin position="490"/>
        <end position="664"/>
    </location>
</feature>
<feature type="short sequence motif" description="DEAH box">
    <location>
        <begin position="280"/>
        <end position="283"/>
    </location>
</feature>
<feature type="binding site" evidence="1">
    <location>
        <begin position="177"/>
        <end position="184"/>
    </location>
    <ligand>
        <name>ATP</name>
        <dbReference type="ChEBI" id="CHEBI:30616"/>
    </ligand>
</feature>
<organism>
    <name type="scientific">Yersinia enterocolitica serotype O:8 / biotype 1B (strain NCTC 13174 / 8081)</name>
    <dbReference type="NCBI Taxonomy" id="393305"/>
    <lineage>
        <taxon>Bacteria</taxon>
        <taxon>Pseudomonadati</taxon>
        <taxon>Pseudomonadota</taxon>
        <taxon>Gammaproteobacteria</taxon>
        <taxon>Enterobacterales</taxon>
        <taxon>Yersiniaceae</taxon>
        <taxon>Yersinia</taxon>
    </lineage>
</organism>
<sequence>MPFTLGQRWISDTESELGLGTVVAIDVRMVTLLFPATGENRLYARNDSPITRVMFNPGDTITHHEGWQLKVEEVSEENGLITYIGTRLDTEETGVSMREVLLDSKLTFSKPQDRLFAGQIDRMDRFALRFRARKYQSEQFRLPWSGLRGIRASLIPHQLHIAYEVGQRHAPRVLLADEVGLGKTIEAGMIIHQQLLSGRAERILIVVPESLQHQWLVEMLRRFNLRFSLFDDSRYSEALLDSTNPFETEQMVICSLDFVRRNKQRLEQLADASWDLLVVDEAHHLAWSEEAPSREYQVIEQLAEHIPGVLLLTATPEQLGQQSHFARLRLLDPDRFHDYEEFINEQQKYRPIADAVTLLLGGERLTDDKLNLLGELINEQDIEPLLKAANSQTEDSEAARQELVTMLMDRHGTSRILFRNTRNGVKGFPHRVLHQIKLPLPTQYQTAIKVSGIMGAKKSLEARAKDMLYPEQIYQEFEGENATWWNFDPRVEWLLNYLIANRNEKVLVICAQAATALQLEQVLREREAIRAAVFHEGLSLIERDRAAAYFASEEDGAQVLLCSEIGSEGRNFQFACQLVMFDLPFNPDLLEQRIGRLDRIGQNREIQIMVPYLENTAQAVLVRWYHEGLDAFEHTCPTGRTIYDSGYQELITYLATPSEQEGLDEFIHTCRQQHEGLKLQLEQGRDRLLEMHSNGGEHGQELAEIIADQDNDVNLVSFALNLFDIVGINQEDRSDNLIVLTPSDHMLVPDFPGLPQDGCTVTFDREQALSREDAQFVSWEHPIIRNGLDLILSGDTGSCAVSLLKNKALPVGTLLAELVYVVEAQAPKHLQLTRFLPPTPVRMLMDKNGTNLAAQVEFESFNRQLNAVNRHTSSKLVNAVQQEVHAMLQQAEALVEEQARLLIEAAKHEADDKLSAELARLEALKAVNPNIRDDEIETLEHNRKMVLENLNQAGWRLDAIRLVVVTHQ</sequence>
<accession>A1JJG0</accession>
<evidence type="ECO:0000255" key="1">
    <source>
        <dbReference type="HAMAP-Rule" id="MF_01821"/>
    </source>
</evidence>
<keyword id="KW-0010">Activator</keyword>
<keyword id="KW-0067">ATP-binding</keyword>
<keyword id="KW-0238">DNA-binding</keyword>
<keyword id="KW-0347">Helicase</keyword>
<keyword id="KW-0378">Hydrolase</keyword>
<keyword id="KW-0547">Nucleotide-binding</keyword>
<keyword id="KW-0804">Transcription</keyword>
<keyword id="KW-0805">Transcription regulation</keyword>
<proteinExistence type="inferred from homology"/>
<gene>
    <name evidence="1" type="primary">rapA</name>
    <name type="ordered locus">YE0636</name>
</gene>
<dbReference type="EC" id="3.6.4.-" evidence="1"/>
<dbReference type="EMBL" id="AM286415">
    <property type="protein sequence ID" value="CAL10748.1"/>
    <property type="molecule type" value="Genomic_DNA"/>
</dbReference>
<dbReference type="RefSeq" id="WP_005167013.1">
    <property type="nucleotide sequence ID" value="NC_008800.1"/>
</dbReference>
<dbReference type="RefSeq" id="YP_001004988.1">
    <property type="nucleotide sequence ID" value="NC_008800.1"/>
</dbReference>
<dbReference type="SMR" id="A1JJG0"/>
<dbReference type="KEGG" id="yen:YE0636"/>
<dbReference type="PATRIC" id="fig|393305.7.peg.729"/>
<dbReference type="eggNOG" id="COG0553">
    <property type="taxonomic scope" value="Bacteria"/>
</dbReference>
<dbReference type="HOGENOM" id="CLU_011520_0_0_6"/>
<dbReference type="OrthoDB" id="9814088at2"/>
<dbReference type="Proteomes" id="UP000000642">
    <property type="component" value="Chromosome"/>
</dbReference>
<dbReference type="GO" id="GO:0005524">
    <property type="term" value="F:ATP binding"/>
    <property type="evidence" value="ECO:0007669"/>
    <property type="project" value="UniProtKB-UniRule"/>
</dbReference>
<dbReference type="GO" id="GO:0003677">
    <property type="term" value="F:DNA binding"/>
    <property type="evidence" value="ECO:0007669"/>
    <property type="project" value="UniProtKB-KW"/>
</dbReference>
<dbReference type="GO" id="GO:0004386">
    <property type="term" value="F:helicase activity"/>
    <property type="evidence" value="ECO:0007669"/>
    <property type="project" value="UniProtKB-UniRule"/>
</dbReference>
<dbReference type="GO" id="GO:0016817">
    <property type="term" value="F:hydrolase activity, acting on acid anhydrides"/>
    <property type="evidence" value="ECO:0007669"/>
    <property type="project" value="InterPro"/>
</dbReference>
<dbReference type="GO" id="GO:0006355">
    <property type="term" value="P:regulation of DNA-templated transcription"/>
    <property type="evidence" value="ECO:0007669"/>
    <property type="project" value="UniProtKB-UniRule"/>
</dbReference>
<dbReference type="CDD" id="cd18011">
    <property type="entry name" value="DEXDc_RapA"/>
    <property type="match status" value="1"/>
</dbReference>
<dbReference type="CDD" id="cd18793">
    <property type="entry name" value="SF2_C_SNF"/>
    <property type="match status" value="1"/>
</dbReference>
<dbReference type="FunFam" id="3.30.360.80:FF:000001">
    <property type="entry name" value="RNA polymerase-associated protein RapA"/>
    <property type="match status" value="1"/>
</dbReference>
<dbReference type="FunFam" id="3.40.50.10810:FF:000012">
    <property type="entry name" value="RNA polymerase-associated protein RapA"/>
    <property type="match status" value="1"/>
</dbReference>
<dbReference type="Gene3D" id="2.30.30.140">
    <property type="match status" value="1"/>
</dbReference>
<dbReference type="Gene3D" id="2.30.30.930">
    <property type="match status" value="1"/>
</dbReference>
<dbReference type="Gene3D" id="3.30.360.80">
    <property type="match status" value="1"/>
</dbReference>
<dbReference type="Gene3D" id="6.10.140.1500">
    <property type="match status" value="1"/>
</dbReference>
<dbReference type="Gene3D" id="6.10.140.2230">
    <property type="match status" value="1"/>
</dbReference>
<dbReference type="Gene3D" id="3.40.50.300">
    <property type="entry name" value="P-loop containing nucleotide triphosphate hydrolases"/>
    <property type="match status" value="1"/>
</dbReference>
<dbReference type="Gene3D" id="3.40.50.10810">
    <property type="entry name" value="Tandem AAA-ATPase domain"/>
    <property type="match status" value="1"/>
</dbReference>
<dbReference type="HAMAP" id="MF_01821">
    <property type="entry name" value="Helicase_RapA"/>
    <property type="match status" value="1"/>
</dbReference>
<dbReference type="InterPro" id="IPR014001">
    <property type="entry name" value="Helicase_ATP-bd"/>
</dbReference>
<dbReference type="InterPro" id="IPR001650">
    <property type="entry name" value="Helicase_C-like"/>
</dbReference>
<dbReference type="InterPro" id="IPR023949">
    <property type="entry name" value="Helicase_RapA"/>
</dbReference>
<dbReference type="InterPro" id="IPR027417">
    <property type="entry name" value="P-loop_NTPase"/>
</dbReference>
<dbReference type="InterPro" id="IPR022737">
    <property type="entry name" value="RapA_C"/>
</dbReference>
<dbReference type="InterPro" id="IPR038718">
    <property type="entry name" value="SNF2-like_sf"/>
</dbReference>
<dbReference type="InterPro" id="IPR049730">
    <property type="entry name" value="SNF2/RAD54-like_C"/>
</dbReference>
<dbReference type="InterPro" id="IPR000330">
    <property type="entry name" value="SNF2_N"/>
</dbReference>
<dbReference type="InterPro" id="IPR040765">
    <property type="entry name" value="Tudor_1_RapA"/>
</dbReference>
<dbReference type="InterPro" id="IPR040766">
    <property type="entry name" value="Tudor_2_RapA"/>
</dbReference>
<dbReference type="NCBIfam" id="NF003426">
    <property type="entry name" value="PRK04914.1"/>
    <property type="match status" value="1"/>
</dbReference>
<dbReference type="PANTHER" id="PTHR45766">
    <property type="entry name" value="DNA ANNEALING HELICASE AND ENDONUCLEASE ZRANB3 FAMILY MEMBER"/>
    <property type="match status" value="1"/>
</dbReference>
<dbReference type="PANTHER" id="PTHR45766:SF6">
    <property type="entry name" value="SWI_SNF-RELATED MATRIX-ASSOCIATED ACTIN-DEPENDENT REGULATOR OF CHROMATIN SUBFAMILY A-LIKE PROTEIN 1"/>
    <property type="match status" value="1"/>
</dbReference>
<dbReference type="Pfam" id="PF00271">
    <property type="entry name" value="Helicase_C"/>
    <property type="match status" value="1"/>
</dbReference>
<dbReference type="Pfam" id="PF12137">
    <property type="entry name" value="RapA_C"/>
    <property type="match status" value="1"/>
</dbReference>
<dbReference type="Pfam" id="PF00176">
    <property type="entry name" value="SNF2-rel_dom"/>
    <property type="match status" value="1"/>
</dbReference>
<dbReference type="Pfam" id="PF18339">
    <property type="entry name" value="Tudor_1_RapA"/>
    <property type="match status" value="1"/>
</dbReference>
<dbReference type="Pfam" id="PF18337">
    <property type="entry name" value="Tudor_RapA"/>
    <property type="match status" value="1"/>
</dbReference>
<dbReference type="SMART" id="SM00487">
    <property type="entry name" value="DEXDc"/>
    <property type="match status" value="1"/>
</dbReference>
<dbReference type="SMART" id="SM00490">
    <property type="entry name" value="HELICc"/>
    <property type="match status" value="1"/>
</dbReference>
<dbReference type="SUPFAM" id="SSF52540">
    <property type="entry name" value="P-loop containing nucleoside triphosphate hydrolases"/>
    <property type="match status" value="2"/>
</dbReference>
<dbReference type="PROSITE" id="PS51192">
    <property type="entry name" value="HELICASE_ATP_BIND_1"/>
    <property type="match status" value="1"/>
</dbReference>
<dbReference type="PROSITE" id="PS51194">
    <property type="entry name" value="HELICASE_CTER"/>
    <property type="match status" value="1"/>
</dbReference>
<protein>
    <recommendedName>
        <fullName evidence="1">RNA polymerase-associated protein RapA</fullName>
        <ecNumber evidence="1">3.6.4.-</ecNumber>
    </recommendedName>
    <alternativeName>
        <fullName evidence="1">ATP-dependent helicase HepA</fullName>
    </alternativeName>
</protein>
<comment type="function">
    <text evidence="1">Transcription regulator that activates transcription by stimulating RNA polymerase (RNAP) recycling in case of stress conditions such as supercoiled DNA or high salt concentrations. Probably acts by releasing the RNAP, when it is trapped or immobilized on tightly supercoiled DNA. Does not activate transcription on linear DNA. Probably not involved in DNA repair.</text>
</comment>
<comment type="subunit">
    <text evidence="1">Interacts with the RNAP. Has a higher affinity for the core RNAP than for the holoenzyme. Its ATPase activity is stimulated by binding to RNAP.</text>
</comment>
<comment type="similarity">
    <text evidence="1">Belongs to the SNF2/RAD54 helicase family. RapA subfamily.</text>
</comment>
<name>RAPA_YERE8</name>